<evidence type="ECO:0000250" key="1"/>
<evidence type="ECO:0000250" key="2">
    <source>
        <dbReference type="UniProtKB" id="P68137"/>
    </source>
</evidence>
<evidence type="ECO:0000305" key="3"/>
<organism>
    <name type="scientific">Dictyostelium discoideum</name>
    <name type="common">Social amoeba</name>
    <dbReference type="NCBI Taxonomy" id="44689"/>
    <lineage>
        <taxon>Eukaryota</taxon>
        <taxon>Amoebozoa</taxon>
        <taxon>Evosea</taxon>
        <taxon>Eumycetozoa</taxon>
        <taxon>Dictyostelia</taxon>
        <taxon>Dictyosteliales</taxon>
        <taxon>Dictyosteliaceae</taxon>
        <taxon>Dictyostelium</taxon>
    </lineage>
</organism>
<comment type="function">
    <text evidence="1">Actins are highly conserved proteins that are involved in various types of cell motility and are ubiquitously expressed in all eukaryotic cells. Multiple isoforms are involved in various cellular functions such as cytoskeleton structure, cell mobility, chromosome movement and muscle contraction (By similarity).</text>
</comment>
<comment type="catalytic activity">
    <reaction evidence="2">
        <text>ATP + H2O = ADP + phosphate + H(+)</text>
        <dbReference type="Rhea" id="RHEA:13065"/>
        <dbReference type="ChEBI" id="CHEBI:15377"/>
        <dbReference type="ChEBI" id="CHEBI:15378"/>
        <dbReference type="ChEBI" id="CHEBI:30616"/>
        <dbReference type="ChEBI" id="CHEBI:43474"/>
        <dbReference type="ChEBI" id="CHEBI:456216"/>
    </reaction>
</comment>
<comment type="subcellular location">
    <subcellularLocation>
        <location evidence="1">Cytoplasm</location>
        <location evidence="1">Cytoskeleton</location>
    </subcellularLocation>
</comment>
<comment type="similarity">
    <text evidence="3">Belongs to the actin family.</text>
</comment>
<sequence>MEREEVQAIVIDNGSDMCKAGFAGDDAPRAVFQSIVGRPRYTGVMDVMGQKDSYIGDEAHSRKGFLTLKYPIERGIVTNWDDMEEIWHHTFYNELGVAPEEHPVLLTEQPLNPKKNREKMTQIMFETFNTPAMYVAIQAVLSLYSSGRTTGIVMDSGDGVSHAVSIYEGHALPHAILRLDLAGRDLSDYMMKILTKRGYSFTTTAEKEIIKDIKEKLSYVALDFDAEMLTAASSTTLEKSYELPDGKVITIGNERFRCPEALFQPSLLAMESAGIHETIYNSIMKCDVDIRRYLFGNVILSGGSTMFPGIADRMNKELTALAPSTMKIKIIAPPERKYSVWVGGSILASLSSFQEMWISKEEYNESGPSIVHRKCSNYLK</sequence>
<proteinExistence type="inferred from homology"/>
<accession>P07828</accession>
<accession>Q54HE5</accession>
<gene>
    <name type="primary">act18</name>
    <name type="synonym">act3-2</name>
    <name type="ORF">DDB_G0289489</name>
</gene>
<reference key="1">
    <citation type="journal article" date="1985" name="J. Mol. Biol.">
        <title>Organization of the actin multigene family of Dictyostelium discoideum and analysis of variability in the protein coding regions.</title>
        <authorList>
            <person name="Romans P."/>
            <person name="Firtel R.A."/>
        </authorList>
    </citation>
    <scope>NUCLEOTIDE SEQUENCE [GENOMIC DNA]</scope>
</reference>
<reference key="2">
    <citation type="journal article" date="2005" name="Nature">
        <title>The genome of the social amoeba Dictyostelium discoideum.</title>
        <authorList>
            <person name="Eichinger L."/>
            <person name="Pachebat J.A."/>
            <person name="Gloeckner G."/>
            <person name="Rajandream M.A."/>
            <person name="Sucgang R."/>
            <person name="Berriman M."/>
            <person name="Song J."/>
            <person name="Olsen R."/>
            <person name="Szafranski K."/>
            <person name="Xu Q."/>
            <person name="Tunggal B."/>
            <person name="Kummerfeld S."/>
            <person name="Madera M."/>
            <person name="Konfortov B.A."/>
            <person name="Rivero F."/>
            <person name="Bankier A.T."/>
            <person name="Lehmann R."/>
            <person name="Hamlin N."/>
            <person name="Davies R."/>
            <person name="Gaudet P."/>
            <person name="Fey P."/>
            <person name="Pilcher K."/>
            <person name="Chen G."/>
            <person name="Saunders D."/>
            <person name="Sodergren E.J."/>
            <person name="Davis P."/>
            <person name="Kerhornou A."/>
            <person name="Nie X."/>
            <person name="Hall N."/>
            <person name="Anjard C."/>
            <person name="Hemphill L."/>
            <person name="Bason N."/>
            <person name="Farbrother P."/>
            <person name="Desany B."/>
            <person name="Just E."/>
            <person name="Morio T."/>
            <person name="Rost R."/>
            <person name="Churcher C.M."/>
            <person name="Cooper J."/>
            <person name="Haydock S."/>
            <person name="van Driessche N."/>
            <person name="Cronin A."/>
            <person name="Goodhead I."/>
            <person name="Muzny D.M."/>
            <person name="Mourier T."/>
            <person name="Pain A."/>
            <person name="Lu M."/>
            <person name="Harper D."/>
            <person name="Lindsay R."/>
            <person name="Hauser H."/>
            <person name="James K.D."/>
            <person name="Quiles M."/>
            <person name="Madan Babu M."/>
            <person name="Saito T."/>
            <person name="Buchrieser C."/>
            <person name="Wardroper A."/>
            <person name="Felder M."/>
            <person name="Thangavelu M."/>
            <person name="Johnson D."/>
            <person name="Knights A."/>
            <person name="Loulseged H."/>
            <person name="Mungall K.L."/>
            <person name="Oliver K."/>
            <person name="Price C."/>
            <person name="Quail M.A."/>
            <person name="Urushihara H."/>
            <person name="Hernandez J."/>
            <person name="Rabbinowitsch E."/>
            <person name="Steffen D."/>
            <person name="Sanders M."/>
            <person name="Ma J."/>
            <person name="Kohara Y."/>
            <person name="Sharp S."/>
            <person name="Simmonds M.N."/>
            <person name="Spiegler S."/>
            <person name="Tivey A."/>
            <person name="Sugano S."/>
            <person name="White B."/>
            <person name="Walker D."/>
            <person name="Woodward J.R."/>
            <person name="Winckler T."/>
            <person name="Tanaka Y."/>
            <person name="Shaulsky G."/>
            <person name="Schleicher M."/>
            <person name="Weinstock G.M."/>
            <person name="Rosenthal A."/>
            <person name="Cox E.C."/>
            <person name="Chisholm R.L."/>
            <person name="Gibbs R.A."/>
            <person name="Loomis W.F."/>
            <person name="Platzer M."/>
            <person name="Kay R.R."/>
            <person name="Williams J.G."/>
            <person name="Dear P.H."/>
            <person name="Noegel A.A."/>
            <person name="Barrell B.G."/>
            <person name="Kuspa A."/>
        </authorList>
    </citation>
    <scope>NUCLEOTIDE SEQUENCE [LARGE SCALE GENOMIC DNA]</scope>
    <source>
        <strain>AX4</strain>
    </source>
</reference>
<keyword id="KW-0067">ATP-binding</keyword>
<keyword id="KW-0963">Cytoplasm</keyword>
<keyword id="KW-0206">Cytoskeleton</keyword>
<keyword id="KW-0378">Hydrolase</keyword>
<keyword id="KW-0547">Nucleotide-binding</keyword>
<keyword id="KW-1185">Reference proteome</keyword>
<feature type="initiator methionine" description="Removed" evidence="1">
    <location>
        <position position="1"/>
    </location>
</feature>
<feature type="chain" id="PRO_0000088925" description="Actin-18">
    <location>
        <begin position="2"/>
        <end position="380"/>
    </location>
</feature>
<feature type="sequence conflict" description="In Ref. 1; CAA27034." evidence="3" ref="1">
    <original>G</original>
    <variation>V</variation>
    <location>
        <position position="56"/>
    </location>
</feature>
<protein>
    <recommendedName>
        <fullName>Actin-18</fullName>
        <ecNumber evidence="2">3.6.4.-</ecNumber>
    </recommendedName>
    <alternativeName>
        <fullName>Actin-3-sub 2</fullName>
    </alternativeName>
</protein>
<dbReference type="EC" id="3.6.4.-" evidence="2"/>
<dbReference type="EMBL" id="X03284">
    <property type="protein sequence ID" value="CAA27034.1"/>
    <property type="molecule type" value="Genomic_DNA"/>
</dbReference>
<dbReference type="EMBL" id="AAFI02000141">
    <property type="protein sequence ID" value="EAL62676.1"/>
    <property type="molecule type" value="Genomic_DNA"/>
</dbReference>
<dbReference type="PIR" id="D23412">
    <property type="entry name" value="D23412"/>
</dbReference>
<dbReference type="RefSeq" id="XP_636193.1">
    <property type="nucleotide sequence ID" value="XM_631101.1"/>
</dbReference>
<dbReference type="SMR" id="P07828"/>
<dbReference type="STRING" id="44689.P07828"/>
<dbReference type="PaxDb" id="44689-DDB0220459"/>
<dbReference type="EnsemblProtists" id="EAL62676">
    <property type="protein sequence ID" value="EAL62676"/>
    <property type="gene ID" value="DDB_G0289489"/>
</dbReference>
<dbReference type="GeneID" id="8627180"/>
<dbReference type="KEGG" id="ddi:DDB_G0289489"/>
<dbReference type="dictyBase" id="DDB_G0289489">
    <property type="gene designation" value="act18"/>
</dbReference>
<dbReference type="VEuPathDB" id="AmoebaDB:DDB_G0289489"/>
<dbReference type="eggNOG" id="KOG0676">
    <property type="taxonomic scope" value="Eukaryota"/>
</dbReference>
<dbReference type="HOGENOM" id="CLU_027965_0_2_1"/>
<dbReference type="InParanoid" id="P07828"/>
<dbReference type="PhylomeDB" id="P07828"/>
<dbReference type="PRO" id="PR:P07828"/>
<dbReference type="Proteomes" id="UP000002195">
    <property type="component" value="Chromosome 5"/>
</dbReference>
<dbReference type="GO" id="GO:0015629">
    <property type="term" value="C:actin cytoskeleton"/>
    <property type="evidence" value="ECO:0000250"/>
    <property type="project" value="dictyBase"/>
</dbReference>
<dbReference type="GO" id="GO:0005737">
    <property type="term" value="C:cytoplasm"/>
    <property type="evidence" value="ECO:0007669"/>
    <property type="project" value="UniProtKB-KW"/>
</dbReference>
<dbReference type="GO" id="GO:0031012">
    <property type="term" value="C:extracellular matrix"/>
    <property type="evidence" value="ECO:0007005"/>
    <property type="project" value="dictyBase"/>
</dbReference>
<dbReference type="GO" id="GO:0005524">
    <property type="term" value="F:ATP binding"/>
    <property type="evidence" value="ECO:0007669"/>
    <property type="project" value="UniProtKB-KW"/>
</dbReference>
<dbReference type="GO" id="GO:0016787">
    <property type="term" value="F:hydrolase activity"/>
    <property type="evidence" value="ECO:0007669"/>
    <property type="project" value="UniProtKB-KW"/>
</dbReference>
<dbReference type="GO" id="GO:0017022">
    <property type="term" value="F:myosin binding"/>
    <property type="evidence" value="ECO:0000250"/>
    <property type="project" value="dictyBase"/>
</dbReference>
<dbReference type="GO" id="GO:0005200">
    <property type="term" value="F:structural constituent of cytoskeleton"/>
    <property type="evidence" value="ECO:0000250"/>
    <property type="project" value="dictyBase"/>
</dbReference>
<dbReference type="GO" id="GO:0006909">
    <property type="term" value="P:phagocytosis"/>
    <property type="evidence" value="ECO:0007669"/>
    <property type="project" value="UniProtKB-ARBA"/>
</dbReference>
<dbReference type="CDD" id="cd10224">
    <property type="entry name" value="ASKHA_NBD_actin"/>
    <property type="match status" value="1"/>
</dbReference>
<dbReference type="FunFam" id="3.30.420.40:FF:000205">
    <property type="entry name" value="Actin, alpha skeletal muscle"/>
    <property type="match status" value="1"/>
</dbReference>
<dbReference type="FunFam" id="3.90.640.10:FF:000047">
    <property type="entry name" value="Actin, alpha skeletal muscle"/>
    <property type="match status" value="1"/>
</dbReference>
<dbReference type="FunFam" id="3.30.420.40:FF:000018">
    <property type="entry name" value="Actin-like protein (Centractin)"/>
    <property type="match status" value="1"/>
</dbReference>
<dbReference type="FunFam" id="3.30.420.40:FF:000404">
    <property type="entry name" value="Major actin"/>
    <property type="match status" value="1"/>
</dbReference>
<dbReference type="FunFam" id="3.30.420.40:FF:000058">
    <property type="entry name" value="Putative actin-related protein 5"/>
    <property type="match status" value="1"/>
</dbReference>
<dbReference type="Gene3D" id="3.30.420.40">
    <property type="match status" value="2"/>
</dbReference>
<dbReference type="Gene3D" id="3.90.640.10">
    <property type="entry name" value="Actin, Chain A, domain 4"/>
    <property type="match status" value="1"/>
</dbReference>
<dbReference type="InterPro" id="IPR004000">
    <property type="entry name" value="Actin"/>
</dbReference>
<dbReference type="InterPro" id="IPR020902">
    <property type="entry name" value="Actin/actin-like_CS"/>
</dbReference>
<dbReference type="InterPro" id="IPR004001">
    <property type="entry name" value="Actin_CS"/>
</dbReference>
<dbReference type="InterPro" id="IPR043129">
    <property type="entry name" value="ATPase_NBD"/>
</dbReference>
<dbReference type="PANTHER" id="PTHR11937">
    <property type="entry name" value="ACTIN"/>
    <property type="match status" value="1"/>
</dbReference>
<dbReference type="Pfam" id="PF00022">
    <property type="entry name" value="Actin"/>
    <property type="match status" value="1"/>
</dbReference>
<dbReference type="PRINTS" id="PR00190">
    <property type="entry name" value="ACTIN"/>
</dbReference>
<dbReference type="SMART" id="SM00268">
    <property type="entry name" value="ACTIN"/>
    <property type="match status" value="1"/>
</dbReference>
<dbReference type="SUPFAM" id="SSF53067">
    <property type="entry name" value="Actin-like ATPase domain"/>
    <property type="match status" value="2"/>
</dbReference>
<dbReference type="PROSITE" id="PS00406">
    <property type="entry name" value="ACTINS_1"/>
    <property type="match status" value="1"/>
</dbReference>
<dbReference type="PROSITE" id="PS00432">
    <property type="entry name" value="ACTINS_2"/>
    <property type="match status" value="1"/>
</dbReference>
<dbReference type="PROSITE" id="PS01132">
    <property type="entry name" value="ACTINS_ACT_LIKE"/>
    <property type="match status" value="1"/>
</dbReference>
<name>ACT18_DICDI</name>